<evidence type="ECO:0000255" key="1">
    <source>
        <dbReference type="HAMAP-Rule" id="MF_00159"/>
    </source>
</evidence>
<comment type="function">
    <text evidence="1">Converts 2C-methyl-D-erythritol 2,4-cyclodiphosphate (ME-2,4cPP) into 1-hydroxy-2-methyl-2-(E)-butenyl 4-diphosphate.</text>
</comment>
<comment type="catalytic activity">
    <reaction evidence="1">
        <text>(2E)-4-hydroxy-3-methylbut-2-enyl diphosphate + oxidized [flavodoxin] + H2O + 2 H(+) = 2-C-methyl-D-erythritol 2,4-cyclic diphosphate + reduced [flavodoxin]</text>
        <dbReference type="Rhea" id="RHEA:43604"/>
        <dbReference type="Rhea" id="RHEA-COMP:10622"/>
        <dbReference type="Rhea" id="RHEA-COMP:10623"/>
        <dbReference type="ChEBI" id="CHEBI:15377"/>
        <dbReference type="ChEBI" id="CHEBI:15378"/>
        <dbReference type="ChEBI" id="CHEBI:57618"/>
        <dbReference type="ChEBI" id="CHEBI:58210"/>
        <dbReference type="ChEBI" id="CHEBI:58483"/>
        <dbReference type="ChEBI" id="CHEBI:128753"/>
        <dbReference type="EC" id="1.17.7.3"/>
    </reaction>
</comment>
<comment type="cofactor">
    <cofactor evidence="1">
        <name>[4Fe-4S] cluster</name>
        <dbReference type="ChEBI" id="CHEBI:49883"/>
    </cofactor>
    <text evidence="1">Binds 1 [4Fe-4S] cluster.</text>
</comment>
<comment type="pathway">
    <text evidence="1">Isoprenoid biosynthesis; isopentenyl diphosphate biosynthesis via DXP pathway; isopentenyl diphosphate from 1-deoxy-D-xylulose 5-phosphate: step 5/6.</text>
</comment>
<comment type="similarity">
    <text evidence="1">Belongs to the IspG family.</text>
</comment>
<accession>A1SU39</accession>
<protein>
    <recommendedName>
        <fullName evidence="1">4-hydroxy-3-methylbut-2-en-1-yl diphosphate synthase (flavodoxin)</fullName>
        <ecNumber evidence="1">1.17.7.3</ecNumber>
    </recommendedName>
    <alternativeName>
        <fullName evidence="1">1-hydroxy-2-methyl-2-(E)-butenyl 4-diphosphate synthase</fullName>
    </alternativeName>
</protein>
<sequence length="369" mass="39899">MSHPSSIVRRVSKQIMVGNVPVGGNAPITVQSMTNTLTTDVAATVAQIKRLEAVGADMVRVSVPTMNAAEAFREIKALSNIPLIADIHFDYRIALKVAEYGVDCLRINPGNIGNERRIRSVVDCARDHNIPIRIGVNGGSLEADIQAKYGEPTAQALVDSALRHVDILDRLNFDQFKVSVKASDAQLAVESYQLLAKQINQPLHLGITEAGGLRSGSVKSAVGLGMLLSQGIGDTLRVSLAADPVEEIKVGFDILKSLRIRSRGINFIACPTCSRQEFDVIATVNALEERLEDITMPMDVSIIGCVVNGPGEALMSDLGITGGSNKSGFYEDGVRQRDRFDNNNVIDQLEAKIRARVSRTDQSNIILKV</sequence>
<reference key="1">
    <citation type="journal article" date="2008" name="BMC Genomics">
        <title>Genomics of an extreme psychrophile, Psychromonas ingrahamii.</title>
        <authorList>
            <person name="Riley M."/>
            <person name="Staley J.T."/>
            <person name="Danchin A."/>
            <person name="Wang T.Z."/>
            <person name="Brettin T.S."/>
            <person name="Hauser L.J."/>
            <person name="Land M.L."/>
            <person name="Thompson L.S."/>
        </authorList>
    </citation>
    <scope>NUCLEOTIDE SEQUENCE [LARGE SCALE GENOMIC DNA]</scope>
    <source>
        <strain>DSM 17664 / CCUG 51855 / 37</strain>
    </source>
</reference>
<keyword id="KW-0004">4Fe-4S</keyword>
<keyword id="KW-0408">Iron</keyword>
<keyword id="KW-0411">Iron-sulfur</keyword>
<keyword id="KW-0414">Isoprene biosynthesis</keyword>
<keyword id="KW-0479">Metal-binding</keyword>
<keyword id="KW-0560">Oxidoreductase</keyword>
<keyword id="KW-1185">Reference proteome</keyword>
<dbReference type="EC" id="1.17.7.3" evidence="1"/>
<dbReference type="EMBL" id="CP000510">
    <property type="protein sequence ID" value="ABM03004.1"/>
    <property type="molecule type" value="Genomic_DNA"/>
</dbReference>
<dbReference type="RefSeq" id="WP_011769567.1">
    <property type="nucleotide sequence ID" value="NC_008709.1"/>
</dbReference>
<dbReference type="SMR" id="A1SU39"/>
<dbReference type="STRING" id="357804.Ping_1168"/>
<dbReference type="KEGG" id="pin:Ping_1168"/>
<dbReference type="eggNOG" id="COG0821">
    <property type="taxonomic scope" value="Bacteria"/>
</dbReference>
<dbReference type="HOGENOM" id="CLU_042258_0_0_6"/>
<dbReference type="OrthoDB" id="9803214at2"/>
<dbReference type="UniPathway" id="UPA00056">
    <property type="reaction ID" value="UER00096"/>
</dbReference>
<dbReference type="Proteomes" id="UP000000639">
    <property type="component" value="Chromosome"/>
</dbReference>
<dbReference type="GO" id="GO:0051539">
    <property type="term" value="F:4 iron, 4 sulfur cluster binding"/>
    <property type="evidence" value="ECO:0007669"/>
    <property type="project" value="UniProtKB-UniRule"/>
</dbReference>
<dbReference type="GO" id="GO:0046429">
    <property type="term" value="F:4-hydroxy-3-methylbut-2-en-1-yl diphosphate synthase activity (ferredoxin)"/>
    <property type="evidence" value="ECO:0007669"/>
    <property type="project" value="UniProtKB-UniRule"/>
</dbReference>
<dbReference type="GO" id="GO:0141197">
    <property type="term" value="F:4-hydroxy-3-methylbut-2-enyl-diphosphate synthase activity (flavodoxin)"/>
    <property type="evidence" value="ECO:0007669"/>
    <property type="project" value="UniProtKB-EC"/>
</dbReference>
<dbReference type="GO" id="GO:0005506">
    <property type="term" value="F:iron ion binding"/>
    <property type="evidence" value="ECO:0007669"/>
    <property type="project" value="InterPro"/>
</dbReference>
<dbReference type="GO" id="GO:0019288">
    <property type="term" value="P:isopentenyl diphosphate biosynthetic process, methylerythritol 4-phosphate pathway"/>
    <property type="evidence" value="ECO:0007669"/>
    <property type="project" value="UniProtKB-UniRule"/>
</dbReference>
<dbReference type="GO" id="GO:0016114">
    <property type="term" value="P:terpenoid biosynthetic process"/>
    <property type="evidence" value="ECO:0007669"/>
    <property type="project" value="InterPro"/>
</dbReference>
<dbReference type="FunFam" id="3.20.20.20:FF:000001">
    <property type="entry name" value="4-hydroxy-3-methylbut-2-en-1-yl diphosphate synthase (flavodoxin)"/>
    <property type="match status" value="1"/>
</dbReference>
<dbReference type="Gene3D" id="3.20.20.20">
    <property type="entry name" value="Dihydropteroate synthase-like"/>
    <property type="match status" value="1"/>
</dbReference>
<dbReference type="Gene3D" id="3.30.413.10">
    <property type="entry name" value="Sulfite Reductase Hemoprotein, domain 1"/>
    <property type="match status" value="1"/>
</dbReference>
<dbReference type="HAMAP" id="MF_00159">
    <property type="entry name" value="IspG"/>
    <property type="match status" value="1"/>
</dbReference>
<dbReference type="InterPro" id="IPR011005">
    <property type="entry name" value="Dihydropteroate_synth-like_sf"/>
</dbReference>
<dbReference type="InterPro" id="IPR016425">
    <property type="entry name" value="IspG_bac"/>
</dbReference>
<dbReference type="InterPro" id="IPR004588">
    <property type="entry name" value="IspG_bac-typ"/>
</dbReference>
<dbReference type="InterPro" id="IPR045854">
    <property type="entry name" value="NO2/SO3_Rdtase_4Fe4S_sf"/>
</dbReference>
<dbReference type="NCBIfam" id="TIGR00612">
    <property type="entry name" value="ispG_gcpE"/>
    <property type="match status" value="1"/>
</dbReference>
<dbReference type="NCBIfam" id="NF001540">
    <property type="entry name" value="PRK00366.1"/>
    <property type="match status" value="1"/>
</dbReference>
<dbReference type="PANTHER" id="PTHR30454">
    <property type="entry name" value="4-HYDROXY-3-METHYLBUT-2-EN-1-YL DIPHOSPHATE SYNTHASE"/>
    <property type="match status" value="1"/>
</dbReference>
<dbReference type="PANTHER" id="PTHR30454:SF0">
    <property type="entry name" value="4-HYDROXY-3-METHYLBUT-2-EN-1-YL DIPHOSPHATE SYNTHASE (FERREDOXIN), CHLOROPLASTIC"/>
    <property type="match status" value="1"/>
</dbReference>
<dbReference type="Pfam" id="PF04551">
    <property type="entry name" value="GcpE"/>
    <property type="match status" value="1"/>
</dbReference>
<dbReference type="PIRSF" id="PIRSF004640">
    <property type="entry name" value="IspG"/>
    <property type="match status" value="1"/>
</dbReference>
<dbReference type="SUPFAM" id="SSF51717">
    <property type="entry name" value="Dihydropteroate synthetase-like"/>
    <property type="match status" value="1"/>
</dbReference>
<dbReference type="SUPFAM" id="SSF56014">
    <property type="entry name" value="Nitrite and sulphite reductase 4Fe-4S domain-like"/>
    <property type="match status" value="1"/>
</dbReference>
<feature type="chain" id="PRO_1000011505" description="4-hydroxy-3-methylbut-2-en-1-yl diphosphate synthase (flavodoxin)">
    <location>
        <begin position="1"/>
        <end position="369"/>
    </location>
</feature>
<feature type="binding site" evidence="1">
    <location>
        <position position="270"/>
    </location>
    <ligand>
        <name>[4Fe-4S] cluster</name>
        <dbReference type="ChEBI" id="CHEBI:49883"/>
    </ligand>
</feature>
<feature type="binding site" evidence="1">
    <location>
        <position position="273"/>
    </location>
    <ligand>
        <name>[4Fe-4S] cluster</name>
        <dbReference type="ChEBI" id="CHEBI:49883"/>
    </ligand>
</feature>
<feature type="binding site" evidence="1">
    <location>
        <position position="305"/>
    </location>
    <ligand>
        <name>[4Fe-4S] cluster</name>
        <dbReference type="ChEBI" id="CHEBI:49883"/>
    </ligand>
</feature>
<feature type="binding site" evidence="1">
    <location>
        <position position="312"/>
    </location>
    <ligand>
        <name>[4Fe-4S] cluster</name>
        <dbReference type="ChEBI" id="CHEBI:49883"/>
    </ligand>
</feature>
<organism>
    <name type="scientific">Psychromonas ingrahamii (strain DSM 17664 / CCUG 51855 / 37)</name>
    <dbReference type="NCBI Taxonomy" id="357804"/>
    <lineage>
        <taxon>Bacteria</taxon>
        <taxon>Pseudomonadati</taxon>
        <taxon>Pseudomonadota</taxon>
        <taxon>Gammaproteobacteria</taxon>
        <taxon>Alteromonadales</taxon>
        <taxon>Psychromonadaceae</taxon>
        <taxon>Psychromonas</taxon>
    </lineage>
</organism>
<proteinExistence type="inferred from homology"/>
<name>ISPG_PSYIN</name>
<gene>
    <name evidence="1" type="primary">ispG</name>
    <name type="ordered locus">Ping_1168</name>
</gene>